<sequence>MSTSDSIVSSQTKQSSWRKSDTTWTLGLFGTAIGAGVLFFPIRAGFGGLIPILLMLVLAYPIAFYCHRALARLCLSGSNPSGNITETVEEHFGKTGGVVITFLYFFAICPLLWIYGVTITNTFMTFWENQLGFAPLNRGFVALFLLLLMAFVIWFGKDLMVKVMSYLVWPFIASLVLISLSLIPYWNSAVIDQVDLGSLSLTGHDGILITVWLGISIMVFSFNFSPIVSSFVVSKREEYEKDFGRDFTERKCSQIISRASMLMVAVVMFFAFSCLFTLSPANMAEAKAQNIPVLSYLANHFASMTGTKTTFAITLEYAASIIALVAIFKSFFGHYLGTLEGLNGLILKFGYKGDKTKVSLGKLNTISMIFIMGSTWVVAYANPNILDLIEAMGAPIIASLLCLLPMYAIRKAPSLAKYRGRLDNVFVTVIGLLTILNIVYKLF</sequence>
<reference key="1">
    <citation type="journal article" date="2006" name="Mol. Microbiol.">
        <title>Role of pathogenicity island-associated integrases in the genome plasticity of uropathogenic Escherichia coli strain 536.</title>
        <authorList>
            <person name="Hochhut B."/>
            <person name="Wilde C."/>
            <person name="Balling G."/>
            <person name="Middendorf B."/>
            <person name="Dobrindt U."/>
            <person name="Brzuszkiewicz E."/>
            <person name="Gottschalk G."/>
            <person name="Carniel E."/>
            <person name="Hacker J."/>
        </authorList>
    </citation>
    <scope>NUCLEOTIDE SEQUENCE [LARGE SCALE GENOMIC DNA]</scope>
    <source>
        <strain>536 / UPEC</strain>
    </source>
</reference>
<accession>Q0TCY8</accession>
<protein>
    <recommendedName>
        <fullName evidence="1">Threonine/serine transporter TdcC</fullName>
    </recommendedName>
    <alternativeName>
        <fullName evidence="1">H(+)/threonine-serine symporter</fullName>
    </alternativeName>
</protein>
<name>TDCC_ECOL5</name>
<feature type="chain" id="PRO_0000309167" description="Threonine/serine transporter TdcC">
    <location>
        <begin position="1"/>
        <end position="443"/>
    </location>
</feature>
<feature type="transmembrane region" description="Helical" evidence="1">
    <location>
        <begin position="22"/>
        <end position="42"/>
    </location>
</feature>
<feature type="transmembrane region" description="Helical" evidence="1">
    <location>
        <begin position="44"/>
        <end position="64"/>
    </location>
</feature>
<feature type="transmembrane region" description="Helical" evidence="1">
    <location>
        <begin position="97"/>
        <end position="117"/>
    </location>
</feature>
<feature type="transmembrane region" description="Helical" evidence="1">
    <location>
        <begin position="140"/>
        <end position="160"/>
    </location>
</feature>
<feature type="transmembrane region" description="Helical" evidence="1">
    <location>
        <begin position="163"/>
        <end position="183"/>
    </location>
</feature>
<feature type="transmembrane region" description="Helical" evidence="1">
    <location>
        <begin position="207"/>
        <end position="227"/>
    </location>
</feature>
<feature type="transmembrane region" description="Helical" evidence="1">
    <location>
        <begin position="261"/>
        <end position="281"/>
    </location>
</feature>
<feature type="transmembrane region" description="Helical" evidence="1">
    <location>
        <begin position="311"/>
        <end position="331"/>
    </location>
</feature>
<feature type="transmembrane region" description="Helical" evidence="1">
    <location>
        <begin position="366"/>
        <end position="386"/>
    </location>
</feature>
<feature type="transmembrane region" description="Helical" evidence="1">
    <location>
        <begin position="389"/>
        <end position="409"/>
    </location>
</feature>
<feature type="transmembrane region" description="Helical" evidence="1">
    <location>
        <begin position="423"/>
        <end position="443"/>
    </location>
</feature>
<comment type="function">
    <text evidence="1">Involved in the import of threonine and serine into the cell, with the concomitant import of a proton (symport system).</text>
</comment>
<comment type="catalytic activity">
    <reaction evidence="1">
        <text>L-threonine(in) + H(+)(in) = L-threonine(out) + H(+)(out)</text>
        <dbReference type="Rhea" id="RHEA:28883"/>
        <dbReference type="ChEBI" id="CHEBI:15378"/>
        <dbReference type="ChEBI" id="CHEBI:57926"/>
    </reaction>
    <physiologicalReaction direction="right-to-left" evidence="1">
        <dbReference type="Rhea" id="RHEA:28885"/>
    </physiologicalReaction>
</comment>
<comment type="catalytic activity">
    <reaction evidence="1">
        <text>L-serine(in) + H(+)(in) = L-serine(out) + H(+)(out)</text>
        <dbReference type="Rhea" id="RHEA:28887"/>
        <dbReference type="ChEBI" id="CHEBI:15378"/>
        <dbReference type="ChEBI" id="CHEBI:33384"/>
    </reaction>
    <physiologicalReaction direction="right-to-left" evidence="1">
        <dbReference type="Rhea" id="RHEA:28889"/>
    </physiologicalReaction>
</comment>
<comment type="subcellular location">
    <subcellularLocation>
        <location evidence="1">Cell inner membrane</location>
        <topology evidence="1">Multi-pass membrane protein</topology>
    </subcellularLocation>
</comment>
<comment type="similarity">
    <text evidence="1">Belongs to the amino acid/polyamine transporter 2 family. SdaC/TdcC subfamily.</text>
</comment>
<evidence type="ECO:0000255" key="1">
    <source>
        <dbReference type="HAMAP-Rule" id="MF_01583"/>
    </source>
</evidence>
<proteinExistence type="inferred from homology"/>
<keyword id="KW-0029">Amino-acid transport</keyword>
<keyword id="KW-0997">Cell inner membrane</keyword>
<keyword id="KW-1003">Cell membrane</keyword>
<keyword id="KW-0472">Membrane</keyword>
<keyword id="KW-0769">Symport</keyword>
<keyword id="KW-0812">Transmembrane</keyword>
<keyword id="KW-1133">Transmembrane helix</keyword>
<keyword id="KW-0813">Transport</keyword>
<dbReference type="EMBL" id="CP000247">
    <property type="protein sequence ID" value="ABG71191.1"/>
    <property type="molecule type" value="Genomic_DNA"/>
</dbReference>
<dbReference type="RefSeq" id="WP_000107720.1">
    <property type="nucleotide sequence ID" value="NC_008253.1"/>
</dbReference>
<dbReference type="SMR" id="Q0TCY8"/>
<dbReference type="GeneID" id="75205075"/>
<dbReference type="KEGG" id="ecp:ECP_3209"/>
<dbReference type="HOGENOM" id="CLU_052043_1_1_6"/>
<dbReference type="Proteomes" id="UP000009182">
    <property type="component" value="Chromosome"/>
</dbReference>
<dbReference type="GO" id="GO:0005886">
    <property type="term" value="C:plasma membrane"/>
    <property type="evidence" value="ECO:0007669"/>
    <property type="project" value="UniProtKB-SubCell"/>
</dbReference>
<dbReference type="GO" id="GO:0015194">
    <property type="term" value="F:L-serine transmembrane transporter activity"/>
    <property type="evidence" value="ECO:0007669"/>
    <property type="project" value="InterPro"/>
</dbReference>
<dbReference type="GO" id="GO:0015293">
    <property type="term" value="F:symporter activity"/>
    <property type="evidence" value="ECO:0007669"/>
    <property type="project" value="UniProtKB-UniRule"/>
</dbReference>
<dbReference type="GO" id="GO:0015565">
    <property type="term" value="F:threonine efflux transmembrane transporter activity"/>
    <property type="evidence" value="ECO:0007669"/>
    <property type="project" value="InterPro"/>
</dbReference>
<dbReference type="HAMAP" id="MF_01583">
    <property type="entry name" value="Thr_Ser_transp_TdcC"/>
    <property type="match status" value="1"/>
</dbReference>
<dbReference type="InterPro" id="IPR018227">
    <property type="entry name" value="Amino_acid_transport_2"/>
</dbReference>
<dbReference type="InterPro" id="IPR004694">
    <property type="entry name" value="Hydroxy_aa_transpt"/>
</dbReference>
<dbReference type="InterPro" id="IPR023726">
    <property type="entry name" value="Thr/Ser_transpt_TdcC"/>
</dbReference>
<dbReference type="NCBIfam" id="NF010152">
    <property type="entry name" value="PRK13629.1"/>
    <property type="match status" value="1"/>
</dbReference>
<dbReference type="NCBIfam" id="TIGR00814">
    <property type="entry name" value="stp"/>
    <property type="match status" value="1"/>
</dbReference>
<dbReference type="PANTHER" id="PTHR35334">
    <property type="entry name" value="SERINE TRANSPORTER"/>
    <property type="match status" value="1"/>
</dbReference>
<dbReference type="PANTHER" id="PTHR35334:SF1">
    <property type="entry name" value="THREONINE_SERINE TRANSPORTER TDCC"/>
    <property type="match status" value="1"/>
</dbReference>
<dbReference type="Pfam" id="PF03222">
    <property type="entry name" value="Trp_Tyr_perm"/>
    <property type="match status" value="1"/>
</dbReference>
<gene>
    <name evidence="1" type="primary">tdcC</name>
    <name type="ordered locus">ECP_3209</name>
</gene>
<organism>
    <name type="scientific">Escherichia coli O6:K15:H31 (strain 536 / UPEC)</name>
    <dbReference type="NCBI Taxonomy" id="362663"/>
    <lineage>
        <taxon>Bacteria</taxon>
        <taxon>Pseudomonadati</taxon>
        <taxon>Pseudomonadota</taxon>
        <taxon>Gammaproteobacteria</taxon>
        <taxon>Enterobacterales</taxon>
        <taxon>Enterobacteriaceae</taxon>
        <taxon>Escherichia</taxon>
    </lineage>
</organism>